<comment type="function">
    <text evidence="1">Required for maturation of urease via the functional incorporation of the urease nickel metallocenter.</text>
</comment>
<comment type="subunit">
    <text evidence="1">UreD, UreF and UreG form a complex that acts as a GTP-hydrolysis-dependent molecular chaperone, activating the urease apoprotein by helping to assemble the nickel containing metallocenter of UreC. The UreE protein probably delivers the nickel.</text>
</comment>
<comment type="subcellular location">
    <subcellularLocation>
        <location evidence="1">Cytoplasm</location>
    </subcellularLocation>
</comment>
<comment type="similarity">
    <text evidence="1">Belongs to the UreF family.</text>
</comment>
<accession>A5UH43</accession>
<proteinExistence type="inferred from homology"/>
<keyword id="KW-0143">Chaperone</keyword>
<keyword id="KW-0963">Cytoplasm</keyword>
<keyword id="KW-0996">Nickel insertion</keyword>
<evidence type="ECO:0000255" key="1">
    <source>
        <dbReference type="HAMAP-Rule" id="MF_01385"/>
    </source>
</evidence>
<dbReference type="EMBL" id="CP000672">
    <property type="protein sequence ID" value="ABR00099.1"/>
    <property type="molecule type" value="Genomic_DNA"/>
</dbReference>
<dbReference type="SMR" id="A5UH43"/>
<dbReference type="KEGG" id="hiq:CGSHiGG_05940"/>
<dbReference type="HOGENOM" id="CLU_049215_4_2_6"/>
<dbReference type="Proteomes" id="UP000001990">
    <property type="component" value="Chromosome"/>
</dbReference>
<dbReference type="GO" id="GO:0005737">
    <property type="term" value="C:cytoplasm"/>
    <property type="evidence" value="ECO:0007669"/>
    <property type="project" value="UniProtKB-SubCell"/>
</dbReference>
<dbReference type="GO" id="GO:0016151">
    <property type="term" value="F:nickel cation binding"/>
    <property type="evidence" value="ECO:0007669"/>
    <property type="project" value="UniProtKB-UniRule"/>
</dbReference>
<dbReference type="Gene3D" id="1.10.4190.10">
    <property type="entry name" value="Urease accessory protein UreF"/>
    <property type="match status" value="1"/>
</dbReference>
<dbReference type="HAMAP" id="MF_01385">
    <property type="entry name" value="UreF"/>
    <property type="match status" value="1"/>
</dbReference>
<dbReference type="InterPro" id="IPR002639">
    <property type="entry name" value="UreF"/>
</dbReference>
<dbReference type="InterPro" id="IPR038277">
    <property type="entry name" value="UreF_sf"/>
</dbReference>
<dbReference type="PANTHER" id="PTHR33620">
    <property type="entry name" value="UREASE ACCESSORY PROTEIN F"/>
    <property type="match status" value="1"/>
</dbReference>
<dbReference type="PANTHER" id="PTHR33620:SF1">
    <property type="entry name" value="UREASE ACCESSORY PROTEIN F"/>
    <property type="match status" value="1"/>
</dbReference>
<dbReference type="Pfam" id="PF01730">
    <property type="entry name" value="UreF"/>
    <property type="match status" value="1"/>
</dbReference>
<dbReference type="PIRSF" id="PIRSF009467">
    <property type="entry name" value="Ureas_acces_UreF"/>
    <property type="match status" value="1"/>
</dbReference>
<feature type="chain" id="PRO_1000145117" description="Urease accessory protein UreF">
    <location>
        <begin position="1"/>
        <end position="235"/>
    </location>
</feature>
<name>UREF_HAEIG</name>
<protein>
    <recommendedName>
        <fullName evidence="1">Urease accessory protein UreF</fullName>
    </recommendedName>
</protein>
<organism>
    <name type="scientific">Haemophilus influenzae (strain PittGG)</name>
    <dbReference type="NCBI Taxonomy" id="374931"/>
    <lineage>
        <taxon>Bacteria</taxon>
        <taxon>Pseudomonadati</taxon>
        <taxon>Pseudomonadota</taxon>
        <taxon>Gammaproteobacteria</taxon>
        <taxon>Pasteurellales</taxon>
        <taxon>Pasteurellaceae</taxon>
        <taxon>Haemophilus</taxon>
    </lineage>
</organism>
<sequence length="235" mass="26415">MAQTLNRSLTDLGALLHLVDPTLPIGGFNHSNGLETFVQQRVVESKATLEEYVQTQLLQNWIYNDGAYLSLAFDAMNEGNFDRLCELDWQLSATKVARESREGSFKLGVRLLKIFIRYETHALLTAYQKAIAEKRVQGYFPIVFAMVAQAMGLTKADTLYAFYYNAAVGVITNGVKLIPLSQMDGQDILFDLRGSLVQAVELSFDPDEEWLGAATLANDIRAMQHEVLYTRLYMS</sequence>
<gene>
    <name evidence="1" type="primary">ureF</name>
    <name type="ordered locus">CGSHiGG_05940</name>
</gene>
<reference key="1">
    <citation type="journal article" date="2007" name="Genome Biol.">
        <title>Characterization and modeling of the Haemophilus influenzae core and supragenomes based on the complete genomic sequences of Rd and 12 clinical nontypeable strains.</title>
        <authorList>
            <person name="Hogg J.S."/>
            <person name="Hu F.Z."/>
            <person name="Janto B."/>
            <person name="Boissy R."/>
            <person name="Hayes J."/>
            <person name="Keefe R."/>
            <person name="Post J.C."/>
            <person name="Ehrlich G.D."/>
        </authorList>
    </citation>
    <scope>NUCLEOTIDE SEQUENCE [LARGE SCALE GENOMIC DNA]</scope>
    <source>
        <strain>PittGG</strain>
    </source>
</reference>